<feature type="chain" id="PRO_0000249974" description="Anhydro-N-acetylmuramic acid kinase">
    <location>
        <begin position="1"/>
        <end position="382"/>
    </location>
</feature>
<feature type="binding site" evidence="1">
    <location>
        <begin position="9"/>
        <end position="16"/>
    </location>
    <ligand>
        <name>ATP</name>
        <dbReference type="ChEBI" id="CHEBI:30616"/>
    </ligand>
</feature>
<accession>Q6HIP4</accession>
<organism>
    <name type="scientific">Bacillus thuringiensis subsp. konkukian (strain 97-27)</name>
    <dbReference type="NCBI Taxonomy" id="281309"/>
    <lineage>
        <taxon>Bacteria</taxon>
        <taxon>Bacillati</taxon>
        <taxon>Bacillota</taxon>
        <taxon>Bacilli</taxon>
        <taxon>Bacillales</taxon>
        <taxon>Bacillaceae</taxon>
        <taxon>Bacillus</taxon>
        <taxon>Bacillus cereus group</taxon>
    </lineage>
</organism>
<sequence>MYIVGVMSGTSLDGIDVALVRIEGSGVESKVELIHFTTVPFCNDIKSEIQQALSIENSNVQLICSLNFKLGLCFANAVKEVCKEANFSLEQLDLIGSHGQTIYHQPKQDGNRIPSTLQIGEPAVIAYETNTTVISNFRTMDMAAGGQGAPLVPYSEVILYRDPSKNRLLQNIGGISNVTVIPSQQSDQNVIAFDTGPGNMIIDEVCQRLFQLPYDQNGEIAKQGRVVDEILTYCMSHPFLKMNPPKSTGREQFGEKFVSELLKRFEKHSKENILTTVTMFTVNSIVHHYKKFILPYYEIDEVILGGGGSYNSTLVEMLRNGLKDENCAIFIQEDIGYSSEAKEAIAFAILANETHHRNPSNVPSATGAKQSVVLGNITFPPL</sequence>
<reference key="1">
    <citation type="journal article" date="2006" name="J. Bacteriol.">
        <title>Pathogenomic sequence analysis of Bacillus cereus and Bacillus thuringiensis isolates closely related to Bacillus anthracis.</title>
        <authorList>
            <person name="Han C.S."/>
            <person name="Xie G."/>
            <person name="Challacombe J.F."/>
            <person name="Altherr M.R."/>
            <person name="Bhotika S.S."/>
            <person name="Bruce D."/>
            <person name="Campbell C.S."/>
            <person name="Campbell M.L."/>
            <person name="Chen J."/>
            <person name="Chertkov O."/>
            <person name="Cleland C."/>
            <person name="Dimitrijevic M."/>
            <person name="Doggett N.A."/>
            <person name="Fawcett J.J."/>
            <person name="Glavina T."/>
            <person name="Goodwin L.A."/>
            <person name="Hill K.K."/>
            <person name="Hitchcock P."/>
            <person name="Jackson P.J."/>
            <person name="Keim P."/>
            <person name="Kewalramani A.R."/>
            <person name="Longmire J."/>
            <person name="Lucas S."/>
            <person name="Malfatti S."/>
            <person name="McMurry K."/>
            <person name="Meincke L.J."/>
            <person name="Misra M."/>
            <person name="Moseman B.L."/>
            <person name="Mundt M."/>
            <person name="Munk A.C."/>
            <person name="Okinaka R.T."/>
            <person name="Parson-Quintana B."/>
            <person name="Reilly L.P."/>
            <person name="Richardson P."/>
            <person name="Robinson D.L."/>
            <person name="Rubin E."/>
            <person name="Saunders E."/>
            <person name="Tapia R."/>
            <person name="Tesmer J.G."/>
            <person name="Thayer N."/>
            <person name="Thompson L.S."/>
            <person name="Tice H."/>
            <person name="Ticknor L.O."/>
            <person name="Wills P.L."/>
            <person name="Brettin T.S."/>
            <person name="Gilna P."/>
        </authorList>
    </citation>
    <scope>NUCLEOTIDE SEQUENCE [LARGE SCALE GENOMIC DNA]</scope>
    <source>
        <strain>97-27</strain>
    </source>
</reference>
<evidence type="ECO:0000255" key="1">
    <source>
        <dbReference type="HAMAP-Rule" id="MF_01270"/>
    </source>
</evidence>
<comment type="function">
    <text evidence="1">Catalyzes the specific phosphorylation of 1,6-anhydro-N-acetylmuramic acid (anhMurNAc) with the simultaneous cleavage of the 1,6-anhydro ring, generating MurNAc-6-P. Is required for the utilization of anhMurNAc either imported from the medium or derived from its own cell wall murein, and thus plays a role in cell wall recycling.</text>
</comment>
<comment type="catalytic activity">
    <reaction evidence="1">
        <text>1,6-anhydro-N-acetyl-beta-muramate + ATP + H2O = N-acetyl-D-muramate 6-phosphate + ADP + H(+)</text>
        <dbReference type="Rhea" id="RHEA:24952"/>
        <dbReference type="ChEBI" id="CHEBI:15377"/>
        <dbReference type="ChEBI" id="CHEBI:15378"/>
        <dbReference type="ChEBI" id="CHEBI:30616"/>
        <dbReference type="ChEBI" id="CHEBI:58690"/>
        <dbReference type="ChEBI" id="CHEBI:58722"/>
        <dbReference type="ChEBI" id="CHEBI:456216"/>
        <dbReference type="EC" id="2.7.1.170"/>
    </reaction>
</comment>
<comment type="pathway">
    <text evidence="1">Amino-sugar metabolism; 1,6-anhydro-N-acetylmuramate degradation.</text>
</comment>
<comment type="pathway">
    <text evidence="1">Cell wall biogenesis; peptidoglycan recycling.</text>
</comment>
<comment type="similarity">
    <text evidence="1">Belongs to the anhydro-N-acetylmuramic acid kinase family.</text>
</comment>
<keyword id="KW-0067">ATP-binding</keyword>
<keyword id="KW-0119">Carbohydrate metabolism</keyword>
<keyword id="KW-0418">Kinase</keyword>
<keyword id="KW-0547">Nucleotide-binding</keyword>
<keyword id="KW-0808">Transferase</keyword>
<protein>
    <recommendedName>
        <fullName evidence="1">Anhydro-N-acetylmuramic acid kinase</fullName>
        <ecNumber evidence="1">2.7.1.170</ecNumber>
    </recommendedName>
    <alternativeName>
        <fullName evidence="1">AnhMurNAc kinase</fullName>
    </alternativeName>
</protein>
<name>ANMK_BACHK</name>
<gene>
    <name evidence="1" type="primary">anmK</name>
    <name type="ordered locus">BT9727_2256</name>
</gene>
<dbReference type="EC" id="2.7.1.170" evidence="1"/>
<dbReference type="EMBL" id="AE017355">
    <property type="protein sequence ID" value="AAT61909.1"/>
    <property type="molecule type" value="Genomic_DNA"/>
</dbReference>
<dbReference type="RefSeq" id="WP_000276045.1">
    <property type="nucleotide sequence ID" value="NC_005957.1"/>
</dbReference>
<dbReference type="RefSeq" id="YP_036582.1">
    <property type="nucleotide sequence ID" value="NC_005957.1"/>
</dbReference>
<dbReference type="SMR" id="Q6HIP4"/>
<dbReference type="KEGG" id="btk:BT9727_2256"/>
<dbReference type="PATRIC" id="fig|281309.8.peg.2383"/>
<dbReference type="HOGENOM" id="CLU_038782_1_0_9"/>
<dbReference type="UniPathway" id="UPA00343"/>
<dbReference type="UniPathway" id="UPA00544"/>
<dbReference type="Proteomes" id="UP000001301">
    <property type="component" value="Chromosome"/>
</dbReference>
<dbReference type="GO" id="GO:0005524">
    <property type="term" value="F:ATP binding"/>
    <property type="evidence" value="ECO:0007669"/>
    <property type="project" value="UniProtKB-UniRule"/>
</dbReference>
<dbReference type="GO" id="GO:0016301">
    <property type="term" value="F:kinase activity"/>
    <property type="evidence" value="ECO:0007669"/>
    <property type="project" value="UniProtKB-KW"/>
</dbReference>
<dbReference type="GO" id="GO:0016773">
    <property type="term" value="F:phosphotransferase activity, alcohol group as acceptor"/>
    <property type="evidence" value="ECO:0007669"/>
    <property type="project" value="UniProtKB-UniRule"/>
</dbReference>
<dbReference type="GO" id="GO:0097175">
    <property type="term" value="P:1,6-anhydro-N-acetyl-beta-muramic acid catabolic process"/>
    <property type="evidence" value="ECO:0007669"/>
    <property type="project" value="UniProtKB-UniRule"/>
</dbReference>
<dbReference type="GO" id="GO:0006040">
    <property type="term" value="P:amino sugar metabolic process"/>
    <property type="evidence" value="ECO:0007669"/>
    <property type="project" value="InterPro"/>
</dbReference>
<dbReference type="GO" id="GO:0009254">
    <property type="term" value="P:peptidoglycan turnover"/>
    <property type="evidence" value="ECO:0007669"/>
    <property type="project" value="UniProtKB-UniRule"/>
</dbReference>
<dbReference type="CDD" id="cd24050">
    <property type="entry name" value="ASKHA_NBD_ANMK"/>
    <property type="match status" value="1"/>
</dbReference>
<dbReference type="Gene3D" id="3.30.420.40">
    <property type="match status" value="2"/>
</dbReference>
<dbReference type="HAMAP" id="MF_01270">
    <property type="entry name" value="AnhMurNAc_kinase"/>
    <property type="match status" value="1"/>
</dbReference>
<dbReference type="InterPro" id="IPR005338">
    <property type="entry name" value="Anhydro_N_Ac-Mur_kinase"/>
</dbReference>
<dbReference type="InterPro" id="IPR043129">
    <property type="entry name" value="ATPase_NBD"/>
</dbReference>
<dbReference type="NCBIfam" id="NF007142">
    <property type="entry name" value="PRK09585.2-1"/>
    <property type="match status" value="1"/>
</dbReference>
<dbReference type="NCBIfam" id="NF007148">
    <property type="entry name" value="PRK09585.3-2"/>
    <property type="match status" value="1"/>
</dbReference>
<dbReference type="PANTHER" id="PTHR30605">
    <property type="entry name" value="ANHYDRO-N-ACETYLMURAMIC ACID KINASE"/>
    <property type="match status" value="1"/>
</dbReference>
<dbReference type="PANTHER" id="PTHR30605:SF0">
    <property type="entry name" value="ANHYDRO-N-ACETYLMURAMIC ACID KINASE"/>
    <property type="match status" value="1"/>
</dbReference>
<dbReference type="Pfam" id="PF03702">
    <property type="entry name" value="AnmK"/>
    <property type="match status" value="1"/>
</dbReference>
<dbReference type="SUPFAM" id="SSF53067">
    <property type="entry name" value="Actin-like ATPase domain"/>
    <property type="match status" value="1"/>
</dbReference>
<proteinExistence type="inferred from homology"/>